<sequence length="366" mass="40043">MERITVNLAERSYPISIGAGLFEDPAYLSQVLSNKNTNQKVVVISNVTVAPLYADKILHQLKQLGCDASLLELPDGEQYKNLDVFNQVMNFLLEGSYARDVVIIALGGGVIGDLVGFASACYQRGVDFIQIPTTLLSQVDSSVGGKTAVNHPLGKNMIGAFYQPKAVIIDTNCLSTLPEREFAAGIAEVIKYGIIYDGAFFDWLEENLDRLYTLDEDALTYAIARCCQIKAEVVAQDEKESGIRALLNLGHTFGHAIEAELGYGNWLHGEAVSSGTVMAAKTSLLRGLISEEQFERIVALLRRAKLPVHTPDSMSFDDFIKHMMRDKKVLSGQLRLVLPTGIGSAEVIADTSQEVIQQAIDFGRNI</sequence>
<name>AROB_VIBPA</name>
<gene>
    <name evidence="1" type="primary">aroB</name>
    <name type="ordered locus">VP2744</name>
</gene>
<dbReference type="EC" id="4.2.3.4" evidence="1"/>
<dbReference type="EMBL" id="BA000031">
    <property type="protein sequence ID" value="BAC61007.1"/>
    <property type="molecule type" value="Genomic_DNA"/>
</dbReference>
<dbReference type="RefSeq" id="NP_799123.1">
    <property type="nucleotide sequence ID" value="NC_004603.1"/>
</dbReference>
<dbReference type="RefSeq" id="WP_005480443.1">
    <property type="nucleotide sequence ID" value="NC_004603.1"/>
</dbReference>
<dbReference type="SMR" id="Q87L68"/>
<dbReference type="GeneID" id="1190294"/>
<dbReference type="KEGG" id="vpa:VP2744"/>
<dbReference type="PATRIC" id="fig|223926.6.peg.2641"/>
<dbReference type="eggNOG" id="COG0337">
    <property type="taxonomic scope" value="Bacteria"/>
</dbReference>
<dbReference type="HOGENOM" id="CLU_001201_0_2_6"/>
<dbReference type="UniPathway" id="UPA00053">
    <property type="reaction ID" value="UER00085"/>
</dbReference>
<dbReference type="Proteomes" id="UP000002493">
    <property type="component" value="Chromosome 1"/>
</dbReference>
<dbReference type="GO" id="GO:0005737">
    <property type="term" value="C:cytoplasm"/>
    <property type="evidence" value="ECO:0007669"/>
    <property type="project" value="UniProtKB-SubCell"/>
</dbReference>
<dbReference type="GO" id="GO:0003856">
    <property type="term" value="F:3-dehydroquinate synthase activity"/>
    <property type="evidence" value="ECO:0007669"/>
    <property type="project" value="UniProtKB-UniRule"/>
</dbReference>
<dbReference type="GO" id="GO:0046872">
    <property type="term" value="F:metal ion binding"/>
    <property type="evidence" value="ECO:0007669"/>
    <property type="project" value="UniProtKB-KW"/>
</dbReference>
<dbReference type="GO" id="GO:0000166">
    <property type="term" value="F:nucleotide binding"/>
    <property type="evidence" value="ECO:0007669"/>
    <property type="project" value="UniProtKB-KW"/>
</dbReference>
<dbReference type="GO" id="GO:0008652">
    <property type="term" value="P:amino acid biosynthetic process"/>
    <property type="evidence" value="ECO:0007669"/>
    <property type="project" value="UniProtKB-KW"/>
</dbReference>
<dbReference type="GO" id="GO:0009073">
    <property type="term" value="P:aromatic amino acid family biosynthetic process"/>
    <property type="evidence" value="ECO:0007669"/>
    <property type="project" value="UniProtKB-KW"/>
</dbReference>
<dbReference type="GO" id="GO:0009423">
    <property type="term" value="P:chorismate biosynthetic process"/>
    <property type="evidence" value="ECO:0007669"/>
    <property type="project" value="UniProtKB-UniRule"/>
</dbReference>
<dbReference type="CDD" id="cd08195">
    <property type="entry name" value="DHQS"/>
    <property type="match status" value="1"/>
</dbReference>
<dbReference type="FunFam" id="1.20.1090.10:FF:000002">
    <property type="entry name" value="3-dehydroquinate synthase"/>
    <property type="match status" value="1"/>
</dbReference>
<dbReference type="FunFam" id="3.40.50.1970:FF:000001">
    <property type="entry name" value="3-dehydroquinate synthase"/>
    <property type="match status" value="1"/>
</dbReference>
<dbReference type="Gene3D" id="3.40.50.1970">
    <property type="match status" value="1"/>
</dbReference>
<dbReference type="Gene3D" id="1.20.1090.10">
    <property type="entry name" value="Dehydroquinate synthase-like - alpha domain"/>
    <property type="match status" value="1"/>
</dbReference>
<dbReference type="HAMAP" id="MF_00110">
    <property type="entry name" value="DHQ_synthase"/>
    <property type="match status" value="1"/>
</dbReference>
<dbReference type="InterPro" id="IPR050071">
    <property type="entry name" value="Dehydroquinate_synthase"/>
</dbReference>
<dbReference type="InterPro" id="IPR016037">
    <property type="entry name" value="DHQ_synth_AroB"/>
</dbReference>
<dbReference type="InterPro" id="IPR030963">
    <property type="entry name" value="DHQ_synth_fam"/>
</dbReference>
<dbReference type="InterPro" id="IPR030960">
    <property type="entry name" value="DHQS/DOIS_N"/>
</dbReference>
<dbReference type="InterPro" id="IPR056179">
    <property type="entry name" value="DHQS_C"/>
</dbReference>
<dbReference type="NCBIfam" id="TIGR01357">
    <property type="entry name" value="aroB"/>
    <property type="match status" value="1"/>
</dbReference>
<dbReference type="PANTHER" id="PTHR43622">
    <property type="entry name" value="3-DEHYDROQUINATE SYNTHASE"/>
    <property type="match status" value="1"/>
</dbReference>
<dbReference type="PANTHER" id="PTHR43622:SF7">
    <property type="entry name" value="3-DEHYDROQUINATE SYNTHASE, CHLOROPLASTIC"/>
    <property type="match status" value="1"/>
</dbReference>
<dbReference type="Pfam" id="PF01761">
    <property type="entry name" value="DHQ_synthase"/>
    <property type="match status" value="1"/>
</dbReference>
<dbReference type="Pfam" id="PF24621">
    <property type="entry name" value="DHQS_C"/>
    <property type="match status" value="1"/>
</dbReference>
<dbReference type="PIRSF" id="PIRSF001455">
    <property type="entry name" value="DHQ_synth"/>
    <property type="match status" value="1"/>
</dbReference>
<dbReference type="SUPFAM" id="SSF56796">
    <property type="entry name" value="Dehydroquinate synthase-like"/>
    <property type="match status" value="1"/>
</dbReference>
<evidence type="ECO:0000255" key="1">
    <source>
        <dbReference type="HAMAP-Rule" id="MF_00110"/>
    </source>
</evidence>
<keyword id="KW-0028">Amino-acid biosynthesis</keyword>
<keyword id="KW-0057">Aromatic amino acid biosynthesis</keyword>
<keyword id="KW-0170">Cobalt</keyword>
<keyword id="KW-0963">Cytoplasm</keyword>
<keyword id="KW-0456">Lyase</keyword>
<keyword id="KW-0479">Metal-binding</keyword>
<keyword id="KW-0520">NAD</keyword>
<keyword id="KW-0547">Nucleotide-binding</keyword>
<keyword id="KW-0862">Zinc</keyword>
<protein>
    <recommendedName>
        <fullName evidence="1">3-dehydroquinate synthase</fullName>
        <shortName evidence="1">DHQS</shortName>
        <ecNumber evidence="1">4.2.3.4</ecNumber>
    </recommendedName>
</protein>
<feature type="chain" id="PRO_0000140805" description="3-dehydroquinate synthase">
    <location>
        <begin position="1"/>
        <end position="366"/>
    </location>
</feature>
<feature type="binding site" evidence="1">
    <location>
        <begin position="75"/>
        <end position="80"/>
    </location>
    <ligand>
        <name>NAD(+)</name>
        <dbReference type="ChEBI" id="CHEBI:57540"/>
    </ligand>
</feature>
<feature type="binding site" evidence="1">
    <location>
        <begin position="109"/>
        <end position="113"/>
    </location>
    <ligand>
        <name>NAD(+)</name>
        <dbReference type="ChEBI" id="CHEBI:57540"/>
    </ligand>
</feature>
<feature type="binding site" evidence="1">
    <location>
        <begin position="133"/>
        <end position="134"/>
    </location>
    <ligand>
        <name>NAD(+)</name>
        <dbReference type="ChEBI" id="CHEBI:57540"/>
    </ligand>
</feature>
<feature type="binding site" evidence="1">
    <location>
        <position position="146"/>
    </location>
    <ligand>
        <name>NAD(+)</name>
        <dbReference type="ChEBI" id="CHEBI:57540"/>
    </ligand>
</feature>
<feature type="binding site" evidence="1">
    <location>
        <position position="155"/>
    </location>
    <ligand>
        <name>NAD(+)</name>
        <dbReference type="ChEBI" id="CHEBI:57540"/>
    </ligand>
</feature>
<feature type="binding site" evidence="1">
    <location>
        <begin position="173"/>
        <end position="176"/>
    </location>
    <ligand>
        <name>NAD(+)</name>
        <dbReference type="ChEBI" id="CHEBI:57540"/>
    </ligand>
</feature>
<feature type="binding site" evidence="1">
    <location>
        <position position="188"/>
    </location>
    <ligand>
        <name>Zn(2+)</name>
        <dbReference type="ChEBI" id="CHEBI:29105"/>
    </ligand>
</feature>
<feature type="binding site" evidence="1">
    <location>
        <position position="251"/>
    </location>
    <ligand>
        <name>Zn(2+)</name>
        <dbReference type="ChEBI" id="CHEBI:29105"/>
    </ligand>
</feature>
<feature type="binding site" evidence="1">
    <location>
        <position position="268"/>
    </location>
    <ligand>
        <name>Zn(2+)</name>
        <dbReference type="ChEBI" id="CHEBI:29105"/>
    </ligand>
</feature>
<accession>Q87L68</accession>
<organism>
    <name type="scientific">Vibrio parahaemolyticus serotype O3:K6 (strain RIMD 2210633)</name>
    <dbReference type="NCBI Taxonomy" id="223926"/>
    <lineage>
        <taxon>Bacteria</taxon>
        <taxon>Pseudomonadati</taxon>
        <taxon>Pseudomonadota</taxon>
        <taxon>Gammaproteobacteria</taxon>
        <taxon>Vibrionales</taxon>
        <taxon>Vibrionaceae</taxon>
        <taxon>Vibrio</taxon>
    </lineage>
</organism>
<comment type="function">
    <text evidence="1">Catalyzes the conversion of 3-deoxy-D-arabino-heptulosonate 7-phosphate (DAHP) to dehydroquinate (DHQ).</text>
</comment>
<comment type="catalytic activity">
    <reaction evidence="1">
        <text>7-phospho-2-dehydro-3-deoxy-D-arabino-heptonate = 3-dehydroquinate + phosphate</text>
        <dbReference type="Rhea" id="RHEA:21968"/>
        <dbReference type="ChEBI" id="CHEBI:32364"/>
        <dbReference type="ChEBI" id="CHEBI:43474"/>
        <dbReference type="ChEBI" id="CHEBI:58394"/>
        <dbReference type="EC" id="4.2.3.4"/>
    </reaction>
</comment>
<comment type="cofactor">
    <cofactor evidence="1">
        <name>NAD(+)</name>
        <dbReference type="ChEBI" id="CHEBI:57540"/>
    </cofactor>
</comment>
<comment type="cofactor">
    <cofactor evidence="1">
        <name>Co(2+)</name>
        <dbReference type="ChEBI" id="CHEBI:48828"/>
    </cofactor>
    <cofactor evidence="1">
        <name>Zn(2+)</name>
        <dbReference type="ChEBI" id="CHEBI:29105"/>
    </cofactor>
    <text evidence="1">Binds 1 divalent metal cation per subunit. Can use either Co(2+) or Zn(2+).</text>
</comment>
<comment type="pathway">
    <text evidence="1">Metabolic intermediate biosynthesis; chorismate biosynthesis; chorismate from D-erythrose 4-phosphate and phosphoenolpyruvate: step 2/7.</text>
</comment>
<comment type="subcellular location">
    <subcellularLocation>
        <location evidence="1">Cytoplasm</location>
    </subcellularLocation>
</comment>
<comment type="similarity">
    <text evidence="1">Belongs to the sugar phosphate cyclases superfamily. Dehydroquinate synthase family.</text>
</comment>
<proteinExistence type="inferred from homology"/>
<reference key="1">
    <citation type="journal article" date="2003" name="Lancet">
        <title>Genome sequence of Vibrio parahaemolyticus: a pathogenic mechanism distinct from that of V. cholerae.</title>
        <authorList>
            <person name="Makino K."/>
            <person name="Oshima K."/>
            <person name="Kurokawa K."/>
            <person name="Yokoyama K."/>
            <person name="Uda T."/>
            <person name="Tagomori K."/>
            <person name="Iijima Y."/>
            <person name="Najima M."/>
            <person name="Nakano M."/>
            <person name="Yamashita A."/>
            <person name="Kubota Y."/>
            <person name="Kimura S."/>
            <person name="Yasunaga T."/>
            <person name="Honda T."/>
            <person name="Shinagawa H."/>
            <person name="Hattori M."/>
            <person name="Iida T."/>
        </authorList>
    </citation>
    <scope>NUCLEOTIDE SEQUENCE [LARGE SCALE GENOMIC DNA]</scope>
    <source>
        <strain>RIMD 2210633</strain>
    </source>
</reference>